<accession>P17910</accession>
<feature type="initiator methionine" description="Removed" evidence="2">
    <location>
        <position position="1"/>
    </location>
</feature>
<feature type="chain" id="PRO_0000068598" description="Protein TraK">
    <location>
        <begin position="2"/>
        <end position="134"/>
    </location>
</feature>
<feature type="region of interest" description="Disordered" evidence="1">
    <location>
        <begin position="74"/>
        <end position="134"/>
    </location>
</feature>
<feature type="compositionally biased region" description="Low complexity" evidence="1">
    <location>
        <begin position="83"/>
        <end position="92"/>
    </location>
</feature>
<feature type="compositionally biased region" description="Basic and acidic residues" evidence="1">
    <location>
        <begin position="99"/>
        <end position="112"/>
    </location>
</feature>
<evidence type="ECO:0000256" key="1">
    <source>
        <dbReference type="SAM" id="MobiDB-lite"/>
    </source>
</evidence>
<evidence type="ECO:0000269" key="2">
    <source>
    </source>
</evidence>
<reference key="1">
    <citation type="journal article" date="1991" name="DNA Seq.">
        <title>Nucleotide sequence and organization of genes flanking the transfer origin of promiscuous plasmid RP4.</title>
        <authorList>
            <person name="Ziegelin G."/>
            <person name="Pansegrau W."/>
            <person name="Strack B."/>
            <person name="Balzer D."/>
            <person name="Kroeger M."/>
            <person name="Kruft V."/>
            <person name="Lanka E."/>
        </authorList>
    </citation>
    <scope>NUCLEOTIDE SEQUENCE [GENOMIC DNA]</scope>
    <scope>PROTEIN SEQUENCE OF 2-10</scope>
    <source>
        <strain>ATCC 33694 / HB101</strain>
    </source>
</reference>
<reference key="2">
    <citation type="journal article" date="1989" name="Proc. Natl. Acad. Sci. U.S.A.">
        <title>Conjugative transfer of promiscuous IncP plasmids: interaction of plasmid-encoded products with the transfer origin.</title>
        <authorList>
            <person name="Fuerste J.P."/>
            <person name="Pansegrau W."/>
            <person name="Ziegelin G."/>
            <person name="Kroeger M."/>
            <person name="Lanka E."/>
        </authorList>
    </citation>
    <scope>NUCLEOTIDE SEQUENCE [GENOMIC DNA] OF 1-59</scope>
</reference>
<name>TRAK4_ECOLX</name>
<geneLocation type="plasmid">
    <name>IncP-alpha RP4</name>
</geneLocation>
<dbReference type="EMBL" id="X54459">
    <property type="protein sequence ID" value="CAA38339.1"/>
    <property type="molecule type" value="Genomic_DNA"/>
</dbReference>
<dbReference type="EMBL" id="M25423">
    <property type="protein sequence ID" value="AAA26422.1"/>
    <property type="molecule type" value="Genomic_DNA"/>
</dbReference>
<dbReference type="PIR" id="S23003">
    <property type="entry name" value="S23003"/>
</dbReference>
<dbReference type="RefSeq" id="WP_011205820.1">
    <property type="nucleotide sequence ID" value="NZ_VMTS01000048.1"/>
</dbReference>
<dbReference type="SMR" id="P17910"/>
<dbReference type="InterPro" id="IPR035225">
    <property type="entry name" value="DUF5338"/>
</dbReference>
<dbReference type="Pfam" id="PF17273">
    <property type="entry name" value="DUF5338"/>
    <property type="match status" value="1"/>
</dbReference>
<organism>
    <name type="scientific">Escherichia coli</name>
    <dbReference type="NCBI Taxonomy" id="562"/>
    <lineage>
        <taxon>Bacteria</taxon>
        <taxon>Pseudomonadati</taxon>
        <taxon>Pseudomonadota</taxon>
        <taxon>Gammaproteobacteria</taxon>
        <taxon>Enterobacterales</taxon>
        <taxon>Enterobacteriaceae</taxon>
        <taxon>Escherichia</taxon>
    </lineage>
</organism>
<gene>
    <name type="primary">traK</name>
</gene>
<keyword id="KW-0903">Direct protein sequencing</keyword>
<keyword id="KW-0614">Plasmid</keyword>
<protein>
    <recommendedName>
        <fullName>Protein TraK</fullName>
    </recommendedName>
</protein>
<proteinExistence type="evidence at protein level"/>
<sequence length="134" mass="14717">MPKSYTDELAEWVESRAAKKRRRDEAAVAFLAVRADVEAALASGYALVTIWEHMRETGKVKFSYETFRSHARRHIKAKPADVPAPQAKAAEPAPAPKTPEPRRPKQGGKAEKPAPAAAPTGFTFNPTPDKKDLL</sequence>